<gene>
    <name evidence="1" type="primary">pyrE</name>
    <name type="ordered locus">alr5099</name>
</gene>
<feature type="chain" id="PRO_0000110664" description="Orotate phosphoribosyltransferase">
    <location>
        <begin position="1"/>
        <end position="206"/>
    </location>
</feature>
<feature type="binding site" evidence="1">
    <location>
        <position position="114"/>
    </location>
    <ligand>
        <name>5-phospho-alpha-D-ribose 1-diphosphate</name>
        <dbReference type="ChEBI" id="CHEBI:58017"/>
        <note>ligand shared between dimeric partners</note>
    </ligand>
</feature>
<feature type="binding site" description="in other chain" evidence="1">
    <location>
        <position position="115"/>
    </location>
    <ligand>
        <name>5-phospho-alpha-D-ribose 1-diphosphate</name>
        <dbReference type="ChEBI" id="CHEBI:58017"/>
        <note>ligand shared between dimeric partners</note>
    </ligand>
</feature>
<feature type="binding site" evidence="1">
    <location>
        <position position="118"/>
    </location>
    <ligand>
        <name>5-phospho-alpha-D-ribose 1-diphosphate</name>
        <dbReference type="ChEBI" id="CHEBI:58017"/>
        <note>ligand shared between dimeric partners</note>
    </ligand>
</feature>
<feature type="binding site" evidence="1">
    <location>
        <position position="120"/>
    </location>
    <ligand>
        <name>5-phospho-alpha-D-ribose 1-diphosphate</name>
        <dbReference type="ChEBI" id="CHEBI:58017"/>
        <note>ligand shared between dimeric partners</note>
    </ligand>
</feature>
<feature type="binding site" description="in other chain" evidence="1">
    <location>
        <begin position="141"/>
        <end position="149"/>
    </location>
    <ligand>
        <name>5-phospho-alpha-D-ribose 1-diphosphate</name>
        <dbReference type="ChEBI" id="CHEBI:58017"/>
        <note>ligand shared between dimeric partners</note>
    </ligand>
</feature>
<feature type="binding site" evidence="1">
    <location>
        <position position="145"/>
    </location>
    <ligand>
        <name>orotate</name>
        <dbReference type="ChEBI" id="CHEBI:30839"/>
    </ligand>
</feature>
<feature type="binding site" evidence="1">
    <location>
        <position position="173"/>
    </location>
    <ligand>
        <name>orotate</name>
        <dbReference type="ChEBI" id="CHEBI:30839"/>
    </ligand>
</feature>
<reference key="1">
    <citation type="journal article" date="2001" name="DNA Res.">
        <title>Complete genomic sequence of the filamentous nitrogen-fixing cyanobacterium Anabaena sp. strain PCC 7120.</title>
        <authorList>
            <person name="Kaneko T."/>
            <person name="Nakamura Y."/>
            <person name="Wolk C.P."/>
            <person name="Kuritz T."/>
            <person name="Sasamoto S."/>
            <person name="Watanabe A."/>
            <person name="Iriguchi M."/>
            <person name="Ishikawa A."/>
            <person name="Kawashima K."/>
            <person name="Kimura T."/>
            <person name="Kishida Y."/>
            <person name="Kohara M."/>
            <person name="Matsumoto M."/>
            <person name="Matsuno A."/>
            <person name="Muraki A."/>
            <person name="Nakazaki N."/>
            <person name="Shimpo S."/>
            <person name="Sugimoto M."/>
            <person name="Takazawa M."/>
            <person name="Yamada M."/>
            <person name="Yasuda M."/>
            <person name="Tabata S."/>
        </authorList>
    </citation>
    <scope>NUCLEOTIDE SEQUENCE [LARGE SCALE GENOMIC DNA]</scope>
    <source>
        <strain>PCC 7120 / SAG 25.82 / UTEX 2576</strain>
    </source>
</reference>
<sequence>MTYSTESLAQSDIWPATADVSTLRRKLLDLLCQLAYKEGDFVLSSGQPSSYYINGKQVTLHPQGALAIGRILLSLLPSDTQAVAGLTLGADPIVTAVSVVSAYENRPIPALIIRKEAKGHGTKAYIEGPNLPEGAKVVVLEDVVTTGQSAMKAVDRLRAAGYVVDEVISLVDRQQGGAEFYQSVGLKFEAVFTIMDLQQRYQELGN</sequence>
<proteinExistence type="inferred from homology"/>
<protein>
    <recommendedName>
        <fullName evidence="1">Orotate phosphoribosyltransferase</fullName>
        <shortName evidence="1">OPRT</shortName>
        <shortName evidence="1">OPRTase</shortName>
        <ecNumber evidence="1">2.4.2.10</ecNumber>
    </recommendedName>
</protein>
<organism>
    <name type="scientific">Nostoc sp. (strain PCC 7120 / SAG 25.82 / UTEX 2576)</name>
    <dbReference type="NCBI Taxonomy" id="103690"/>
    <lineage>
        <taxon>Bacteria</taxon>
        <taxon>Bacillati</taxon>
        <taxon>Cyanobacteriota</taxon>
        <taxon>Cyanophyceae</taxon>
        <taxon>Nostocales</taxon>
        <taxon>Nostocaceae</taxon>
        <taxon>Nostoc</taxon>
    </lineage>
</organism>
<evidence type="ECO:0000255" key="1">
    <source>
        <dbReference type="HAMAP-Rule" id="MF_01208"/>
    </source>
</evidence>
<dbReference type="EC" id="2.4.2.10" evidence="1"/>
<dbReference type="EMBL" id="BA000019">
    <property type="protein sequence ID" value="BAB76798.1"/>
    <property type="molecule type" value="Genomic_DNA"/>
</dbReference>
<dbReference type="PIR" id="AC2443">
    <property type="entry name" value="AC2443"/>
</dbReference>
<dbReference type="RefSeq" id="WP_010999225.1">
    <property type="nucleotide sequence ID" value="NZ_RSCN01000014.1"/>
</dbReference>
<dbReference type="SMR" id="Q8YM41"/>
<dbReference type="STRING" id="103690.gene:10497158"/>
<dbReference type="KEGG" id="ana:alr5099"/>
<dbReference type="eggNOG" id="COG0461">
    <property type="taxonomic scope" value="Bacteria"/>
</dbReference>
<dbReference type="OrthoDB" id="9785917at2"/>
<dbReference type="UniPathway" id="UPA00070">
    <property type="reaction ID" value="UER00119"/>
</dbReference>
<dbReference type="Proteomes" id="UP000002483">
    <property type="component" value="Chromosome"/>
</dbReference>
<dbReference type="GO" id="GO:0000287">
    <property type="term" value="F:magnesium ion binding"/>
    <property type="evidence" value="ECO:0007669"/>
    <property type="project" value="UniProtKB-UniRule"/>
</dbReference>
<dbReference type="GO" id="GO:0004588">
    <property type="term" value="F:orotate phosphoribosyltransferase activity"/>
    <property type="evidence" value="ECO:0007669"/>
    <property type="project" value="UniProtKB-UniRule"/>
</dbReference>
<dbReference type="GO" id="GO:0044205">
    <property type="term" value="P:'de novo' UMP biosynthetic process"/>
    <property type="evidence" value="ECO:0007669"/>
    <property type="project" value="UniProtKB-UniRule"/>
</dbReference>
<dbReference type="GO" id="GO:0019856">
    <property type="term" value="P:pyrimidine nucleobase biosynthetic process"/>
    <property type="evidence" value="ECO:0007669"/>
    <property type="project" value="TreeGrafter"/>
</dbReference>
<dbReference type="CDD" id="cd06223">
    <property type="entry name" value="PRTases_typeI"/>
    <property type="match status" value="1"/>
</dbReference>
<dbReference type="FunFam" id="3.40.50.2020:FF:000029">
    <property type="entry name" value="Orotate phosphoribosyltransferase"/>
    <property type="match status" value="1"/>
</dbReference>
<dbReference type="Gene3D" id="3.40.50.2020">
    <property type="match status" value="1"/>
</dbReference>
<dbReference type="HAMAP" id="MF_01208">
    <property type="entry name" value="PyrE"/>
    <property type="match status" value="1"/>
</dbReference>
<dbReference type="InterPro" id="IPR023031">
    <property type="entry name" value="OPRT"/>
</dbReference>
<dbReference type="InterPro" id="IPR004467">
    <property type="entry name" value="Or_phspho_trans_dom"/>
</dbReference>
<dbReference type="InterPro" id="IPR000836">
    <property type="entry name" value="PRibTrfase_dom"/>
</dbReference>
<dbReference type="InterPro" id="IPR029057">
    <property type="entry name" value="PRTase-like"/>
</dbReference>
<dbReference type="NCBIfam" id="TIGR00336">
    <property type="entry name" value="pyrE"/>
    <property type="match status" value="1"/>
</dbReference>
<dbReference type="PANTHER" id="PTHR19278">
    <property type="entry name" value="OROTATE PHOSPHORIBOSYLTRANSFERASE"/>
    <property type="match status" value="1"/>
</dbReference>
<dbReference type="PANTHER" id="PTHR19278:SF9">
    <property type="entry name" value="URIDINE 5'-MONOPHOSPHATE SYNTHASE"/>
    <property type="match status" value="1"/>
</dbReference>
<dbReference type="SUPFAM" id="SSF53271">
    <property type="entry name" value="PRTase-like"/>
    <property type="match status" value="1"/>
</dbReference>
<dbReference type="PROSITE" id="PS00103">
    <property type="entry name" value="PUR_PYR_PR_TRANSFER"/>
    <property type="match status" value="1"/>
</dbReference>
<name>PYRE_NOSS1</name>
<accession>Q8YM41</accession>
<comment type="function">
    <text evidence="1">Catalyzes the transfer of a ribosyl phosphate group from 5-phosphoribose 1-diphosphate to orotate, leading to the formation of orotidine monophosphate (OMP).</text>
</comment>
<comment type="catalytic activity">
    <reaction evidence="1">
        <text>orotidine 5'-phosphate + diphosphate = orotate + 5-phospho-alpha-D-ribose 1-diphosphate</text>
        <dbReference type="Rhea" id="RHEA:10380"/>
        <dbReference type="ChEBI" id="CHEBI:30839"/>
        <dbReference type="ChEBI" id="CHEBI:33019"/>
        <dbReference type="ChEBI" id="CHEBI:57538"/>
        <dbReference type="ChEBI" id="CHEBI:58017"/>
        <dbReference type="EC" id="2.4.2.10"/>
    </reaction>
</comment>
<comment type="cofactor">
    <cofactor evidence="1">
        <name>Mg(2+)</name>
        <dbReference type="ChEBI" id="CHEBI:18420"/>
    </cofactor>
</comment>
<comment type="pathway">
    <text evidence="1">Pyrimidine metabolism; UMP biosynthesis via de novo pathway; UMP from orotate: step 1/2.</text>
</comment>
<comment type="subunit">
    <text evidence="1">Homodimer.</text>
</comment>
<comment type="similarity">
    <text evidence="1">Belongs to the purine/pyrimidine phosphoribosyltransferase family. PyrE subfamily.</text>
</comment>
<keyword id="KW-0328">Glycosyltransferase</keyword>
<keyword id="KW-0460">Magnesium</keyword>
<keyword id="KW-0665">Pyrimidine biosynthesis</keyword>
<keyword id="KW-1185">Reference proteome</keyword>
<keyword id="KW-0808">Transferase</keyword>